<protein>
    <recommendedName>
        <fullName>Aurora kinase</fullName>
        <ecNumber evidence="3">2.7.11.1</ecNumber>
    </recommendedName>
    <alternativeName>
        <fullName>Spindle assembly checkpoint kinase</fullName>
    </alternativeName>
</protein>
<dbReference type="EC" id="2.7.11.1" evidence="3"/>
<dbReference type="EMBL" id="CR382131">
    <property type="protein sequence ID" value="CAG80377.1"/>
    <property type="molecule type" value="Genomic_DNA"/>
</dbReference>
<dbReference type="RefSeq" id="XP_504770.1">
    <property type="nucleotide sequence ID" value="XM_504770.1"/>
</dbReference>
<dbReference type="SMR" id="Q6C3J2"/>
<dbReference type="FunCoup" id="Q6C3J2">
    <property type="interactions" value="1082"/>
</dbReference>
<dbReference type="STRING" id="284591.Q6C3J2"/>
<dbReference type="EnsemblFungi" id="CAG80377">
    <property type="protein sequence ID" value="CAG80377"/>
    <property type="gene ID" value="YALI0_E34375g"/>
</dbReference>
<dbReference type="KEGG" id="yli:2912237"/>
<dbReference type="VEuPathDB" id="FungiDB:YALI0_E34375g"/>
<dbReference type="HOGENOM" id="CLU_000288_63_6_1"/>
<dbReference type="InParanoid" id="Q6C3J2"/>
<dbReference type="OMA" id="ESRFPEW"/>
<dbReference type="OrthoDB" id="45at4891"/>
<dbReference type="Proteomes" id="UP000001300">
    <property type="component" value="Chromosome E"/>
</dbReference>
<dbReference type="GO" id="GO:0032133">
    <property type="term" value="C:chromosome passenger complex"/>
    <property type="evidence" value="ECO:0000318"/>
    <property type="project" value="GO_Central"/>
</dbReference>
<dbReference type="GO" id="GO:0005737">
    <property type="term" value="C:cytoplasm"/>
    <property type="evidence" value="ECO:0007669"/>
    <property type="project" value="UniProtKB-KW"/>
</dbReference>
<dbReference type="GO" id="GO:0000776">
    <property type="term" value="C:kinetochore"/>
    <property type="evidence" value="ECO:0000318"/>
    <property type="project" value="GO_Central"/>
</dbReference>
<dbReference type="GO" id="GO:0005634">
    <property type="term" value="C:nucleus"/>
    <property type="evidence" value="ECO:0000318"/>
    <property type="project" value="GO_Central"/>
</dbReference>
<dbReference type="GO" id="GO:0005876">
    <property type="term" value="C:spindle microtubule"/>
    <property type="evidence" value="ECO:0000318"/>
    <property type="project" value="GO_Central"/>
</dbReference>
<dbReference type="GO" id="GO:0051233">
    <property type="term" value="C:spindle midzone"/>
    <property type="evidence" value="ECO:0000318"/>
    <property type="project" value="GO_Central"/>
</dbReference>
<dbReference type="GO" id="GO:0000922">
    <property type="term" value="C:spindle pole"/>
    <property type="evidence" value="ECO:0000318"/>
    <property type="project" value="GO_Central"/>
</dbReference>
<dbReference type="GO" id="GO:0005524">
    <property type="term" value="F:ATP binding"/>
    <property type="evidence" value="ECO:0007669"/>
    <property type="project" value="UniProtKB-KW"/>
</dbReference>
<dbReference type="GO" id="GO:0106310">
    <property type="term" value="F:protein serine kinase activity"/>
    <property type="evidence" value="ECO:0007669"/>
    <property type="project" value="RHEA"/>
</dbReference>
<dbReference type="GO" id="GO:0004674">
    <property type="term" value="F:protein serine/threonine kinase activity"/>
    <property type="evidence" value="ECO:0007669"/>
    <property type="project" value="UniProtKB-KW"/>
</dbReference>
<dbReference type="GO" id="GO:0007059">
    <property type="term" value="P:chromosome segregation"/>
    <property type="evidence" value="ECO:0007669"/>
    <property type="project" value="UniProtKB-KW"/>
</dbReference>
<dbReference type="GO" id="GO:0007052">
    <property type="term" value="P:mitotic spindle organization"/>
    <property type="evidence" value="ECO:0000318"/>
    <property type="project" value="GO_Central"/>
</dbReference>
<dbReference type="GO" id="GO:0032465">
    <property type="term" value="P:regulation of cytokinesis"/>
    <property type="evidence" value="ECO:0000318"/>
    <property type="project" value="GO_Central"/>
</dbReference>
<dbReference type="CDD" id="cd14007">
    <property type="entry name" value="STKc_Aurora"/>
    <property type="match status" value="1"/>
</dbReference>
<dbReference type="FunFam" id="3.30.200.20:FF:000042">
    <property type="entry name" value="Aurora kinase A"/>
    <property type="match status" value="1"/>
</dbReference>
<dbReference type="FunFam" id="1.10.510.10:FF:000235">
    <property type="entry name" value="Serine/threonine-protein kinase ark1"/>
    <property type="match status" value="1"/>
</dbReference>
<dbReference type="Gene3D" id="1.10.510.10">
    <property type="entry name" value="Transferase(Phosphotransferase) domain 1"/>
    <property type="match status" value="1"/>
</dbReference>
<dbReference type="InterPro" id="IPR030616">
    <property type="entry name" value="Aur-like"/>
</dbReference>
<dbReference type="InterPro" id="IPR011009">
    <property type="entry name" value="Kinase-like_dom_sf"/>
</dbReference>
<dbReference type="InterPro" id="IPR000719">
    <property type="entry name" value="Prot_kinase_dom"/>
</dbReference>
<dbReference type="InterPro" id="IPR017441">
    <property type="entry name" value="Protein_kinase_ATP_BS"/>
</dbReference>
<dbReference type="InterPro" id="IPR008271">
    <property type="entry name" value="Ser/Thr_kinase_AS"/>
</dbReference>
<dbReference type="PANTHER" id="PTHR24350">
    <property type="entry name" value="SERINE/THREONINE-PROTEIN KINASE IAL-RELATED"/>
    <property type="match status" value="1"/>
</dbReference>
<dbReference type="Pfam" id="PF00069">
    <property type="entry name" value="Pkinase"/>
    <property type="match status" value="1"/>
</dbReference>
<dbReference type="SMART" id="SM00220">
    <property type="entry name" value="S_TKc"/>
    <property type="match status" value="1"/>
</dbReference>
<dbReference type="SUPFAM" id="SSF56112">
    <property type="entry name" value="Protein kinase-like (PK-like)"/>
    <property type="match status" value="1"/>
</dbReference>
<dbReference type="PROSITE" id="PS00107">
    <property type="entry name" value="PROTEIN_KINASE_ATP"/>
    <property type="match status" value="1"/>
</dbReference>
<dbReference type="PROSITE" id="PS50011">
    <property type="entry name" value="PROTEIN_KINASE_DOM"/>
    <property type="match status" value="1"/>
</dbReference>
<dbReference type="PROSITE" id="PS00108">
    <property type="entry name" value="PROTEIN_KINASE_ST"/>
    <property type="match status" value="1"/>
</dbReference>
<keyword id="KW-0067">ATP-binding</keyword>
<keyword id="KW-0131">Cell cycle</keyword>
<keyword id="KW-0137">Centromere</keyword>
<keyword id="KW-0158">Chromosome</keyword>
<keyword id="KW-0159">Chromosome partition</keyword>
<keyword id="KW-0963">Cytoplasm</keyword>
<keyword id="KW-0206">Cytoskeleton</keyword>
<keyword id="KW-0418">Kinase</keyword>
<keyword id="KW-0995">Kinetochore</keyword>
<keyword id="KW-0547">Nucleotide-binding</keyword>
<keyword id="KW-0539">Nucleus</keyword>
<keyword id="KW-1185">Reference proteome</keyword>
<keyword id="KW-0723">Serine/threonine-protein kinase</keyword>
<keyword id="KW-0808">Transferase</keyword>
<reference key="1">
    <citation type="journal article" date="2004" name="Nature">
        <title>Genome evolution in yeasts.</title>
        <authorList>
            <person name="Dujon B."/>
            <person name="Sherman D."/>
            <person name="Fischer G."/>
            <person name="Durrens P."/>
            <person name="Casaregola S."/>
            <person name="Lafontaine I."/>
            <person name="de Montigny J."/>
            <person name="Marck C."/>
            <person name="Neuveglise C."/>
            <person name="Talla E."/>
            <person name="Goffard N."/>
            <person name="Frangeul L."/>
            <person name="Aigle M."/>
            <person name="Anthouard V."/>
            <person name="Babour A."/>
            <person name="Barbe V."/>
            <person name="Barnay S."/>
            <person name="Blanchin S."/>
            <person name="Beckerich J.-M."/>
            <person name="Beyne E."/>
            <person name="Bleykasten C."/>
            <person name="Boisrame A."/>
            <person name="Boyer J."/>
            <person name="Cattolico L."/>
            <person name="Confanioleri F."/>
            <person name="de Daruvar A."/>
            <person name="Despons L."/>
            <person name="Fabre E."/>
            <person name="Fairhead C."/>
            <person name="Ferry-Dumazet H."/>
            <person name="Groppi A."/>
            <person name="Hantraye F."/>
            <person name="Hennequin C."/>
            <person name="Jauniaux N."/>
            <person name="Joyet P."/>
            <person name="Kachouri R."/>
            <person name="Kerrest A."/>
            <person name="Koszul R."/>
            <person name="Lemaire M."/>
            <person name="Lesur I."/>
            <person name="Ma L."/>
            <person name="Muller H."/>
            <person name="Nicaud J.-M."/>
            <person name="Nikolski M."/>
            <person name="Oztas S."/>
            <person name="Ozier-Kalogeropoulos O."/>
            <person name="Pellenz S."/>
            <person name="Potier S."/>
            <person name="Richard G.-F."/>
            <person name="Straub M.-L."/>
            <person name="Suleau A."/>
            <person name="Swennen D."/>
            <person name="Tekaia F."/>
            <person name="Wesolowski-Louvel M."/>
            <person name="Westhof E."/>
            <person name="Wirth B."/>
            <person name="Zeniou-Meyer M."/>
            <person name="Zivanovic Y."/>
            <person name="Bolotin-Fukuhara M."/>
            <person name="Thierry A."/>
            <person name="Bouchier C."/>
            <person name="Caudron B."/>
            <person name="Scarpelli C."/>
            <person name="Gaillardin C."/>
            <person name="Weissenbach J."/>
            <person name="Wincker P."/>
            <person name="Souciet J.-L."/>
        </authorList>
    </citation>
    <scope>NUCLEOTIDE SEQUENCE [LARGE SCALE GENOMIC DNA]</scope>
    <source>
        <strain>CLIB 122 / E 150</strain>
    </source>
</reference>
<accession>Q6C3J2</accession>
<name>AURK_YARLI</name>
<comment type="function">
    <text evidence="3">Component of the chromosomal passenger complex (CPC), a complex that acts as a key regulator of chromosome segregation and cytokinesis. Has a role in error-correction of aberrent kinetochore-microtubule attachments to ensure that sister kinetochores become bioriented and connect to opposite poles by promoting spindle assembly checkpoint signaling.</text>
</comment>
<comment type="catalytic activity">
    <reaction evidence="2">
        <text>L-seryl-[protein] + ATP = O-phospho-L-seryl-[protein] + ADP + H(+)</text>
        <dbReference type="Rhea" id="RHEA:17989"/>
        <dbReference type="Rhea" id="RHEA-COMP:9863"/>
        <dbReference type="Rhea" id="RHEA-COMP:11604"/>
        <dbReference type="ChEBI" id="CHEBI:15378"/>
        <dbReference type="ChEBI" id="CHEBI:29999"/>
        <dbReference type="ChEBI" id="CHEBI:30616"/>
        <dbReference type="ChEBI" id="CHEBI:83421"/>
        <dbReference type="ChEBI" id="CHEBI:456216"/>
        <dbReference type="EC" id="2.7.11.1"/>
    </reaction>
</comment>
<comment type="catalytic activity">
    <reaction>
        <text>L-threonyl-[protein] + ATP = O-phospho-L-threonyl-[protein] + ADP + H(+)</text>
        <dbReference type="Rhea" id="RHEA:46608"/>
        <dbReference type="Rhea" id="RHEA-COMP:11060"/>
        <dbReference type="Rhea" id="RHEA-COMP:11605"/>
        <dbReference type="ChEBI" id="CHEBI:15378"/>
        <dbReference type="ChEBI" id="CHEBI:30013"/>
        <dbReference type="ChEBI" id="CHEBI:30616"/>
        <dbReference type="ChEBI" id="CHEBI:61977"/>
        <dbReference type="ChEBI" id="CHEBI:456216"/>
        <dbReference type="EC" id="2.7.11.1"/>
    </reaction>
</comment>
<comment type="subcellular location">
    <subcellularLocation>
        <location evidence="1">Nucleus</location>
    </subcellularLocation>
    <subcellularLocation>
        <location evidence="1">Cytoplasm</location>
        <location evidence="1">Cytoskeleton</location>
        <location evidence="1">Spindle</location>
    </subcellularLocation>
    <subcellularLocation>
        <location evidence="1">Chromosome</location>
        <location evidence="1">Centromere</location>
        <location evidence="1">Kinetochore</location>
    </subcellularLocation>
    <text evidence="1">Associates with the mitotic spindle and on elongated and disassembling spindles. Also associated with the kinetochore (By similarity).</text>
</comment>
<comment type="similarity">
    <text evidence="4">Belongs to the protein kinase superfamily. Ser/Thr protein kinase family. Aurora subfamily.</text>
</comment>
<evidence type="ECO:0000250" key="1"/>
<evidence type="ECO:0000250" key="2">
    <source>
        <dbReference type="UniProtKB" id="D6W3G1"/>
    </source>
</evidence>
<evidence type="ECO:0000250" key="3">
    <source>
        <dbReference type="UniProtKB" id="P38991"/>
    </source>
</evidence>
<evidence type="ECO:0000255" key="4">
    <source>
        <dbReference type="PROSITE-ProRule" id="PRU00159"/>
    </source>
</evidence>
<evidence type="ECO:0000255" key="5">
    <source>
        <dbReference type="PROSITE-ProRule" id="PRU10027"/>
    </source>
</evidence>
<evidence type="ECO:0000256" key="6">
    <source>
        <dbReference type="SAM" id="MobiDB-lite"/>
    </source>
</evidence>
<feature type="chain" id="PRO_0000086028" description="Aurora kinase">
    <location>
        <begin position="1"/>
        <end position="371"/>
    </location>
</feature>
<feature type="domain" description="Protein kinase" evidence="4">
    <location>
        <begin position="99"/>
        <end position="350"/>
    </location>
</feature>
<feature type="region of interest" description="Disordered" evidence="6">
    <location>
        <begin position="1"/>
        <end position="84"/>
    </location>
</feature>
<feature type="compositionally biased region" description="Polar residues" evidence="6">
    <location>
        <begin position="1"/>
        <end position="15"/>
    </location>
</feature>
<feature type="compositionally biased region" description="Polar residues" evidence="6">
    <location>
        <begin position="48"/>
        <end position="80"/>
    </location>
</feature>
<feature type="active site" description="Proton acceptor" evidence="4 5">
    <location>
        <position position="222"/>
    </location>
</feature>
<feature type="binding site" evidence="4">
    <location>
        <begin position="105"/>
        <end position="113"/>
    </location>
    <ligand>
        <name>ATP</name>
        <dbReference type="ChEBI" id="CHEBI:30616"/>
    </ligand>
</feature>
<feature type="binding site" evidence="4">
    <location>
        <position position="128"/>
    </location>
    <ligand>
        <name>ATP</name>
        <dbReference type="ChEBI" id="CHEBI:30616"/>
    </ligand>
</feature>
<organism>
    <name type="scientific">Yarrowia lipolytica (strain CLIB 122 / E 150)</name>
    <name type="common">Yeast</name>
    <name type="synonym">Candida lipolytica</name>
    <dbReference type="NCBI Taxonomy" id="284591"/>
    <lineage>
        <taxon>Eukaryota</taxon>
        <taxon>Fungi</taxon>
        <taxon>Dikarya</taxon>
        <taxon>Ascomycota</taxon>
        <taxon>Saccharomycotina</taxon>
        <taxon>Dipodascomycetes</taxon>
        <taxon>Dipodascales</taxon>
        <taxon>Dipodascales incertae sedis</taxon>
        <taxon>Yarrowia</taxon>
    </lineage>
</organism>
<gene>
    <name type="primary">IPL1</name>
    <name type="ordered locus">YALI0E34375g</name>
</gene>
<sequence length="371" mass="42751">MSMKQLETSMSSVSLQEKKPTRIKIALHPQSKSEQNETDRASKIPTGRISTTQPQTYYRPTNLTKTPASQVSRRSSYTTDPPSPLTGITGFRNYSLDDFEIGKALGKGKFGKVYLVKDKKTGFVSALKCMEKKELVEGNVEKQFRREVEIQSNLRHTNVLRLFGHFHDKDRVYLILEYVVHGELYKLLRNQKRFTESTASSYIYQMSEALLYLHGKNIIHRDIKPENILLHFNDTIKISDFGWSVHAPSNRRSTLCGTMDYLPPEIVQSRPYDKNVDVWSLGILMYEFLCGAPPFEEPGGAQATYRRIVKLDLRIPPYVSADAADLIKRMLTLDPAKRFKLKDMHKHPWIVRLRPTWKYKVPKTASHERSA</sequence>
<proteinExistence type="inferred from homology"/>